<feature type="chain" id="PRO_0000298910" description="Transcription factor E2F8">
    <location>
        <begin position="1"/>
        <end position="860"/>
    </location>
</feature>
<feature type="DNA-binding region" evidence="3">
    <location>
        <begin position="113"/>
        <end position="182"/>
    </location>
</feature>
<feature type="DNA-binding region" evidence="3">
    <location>
        <begin position="261"/>
        <end position="347"/>
    </location>
</feature>
<feature type="region of interest" description="Disordered" evidence="4">
    <location>
        <begin position="1"/>
        <end position="27"/>
    </location>
</feature>
<feature type="region of interest" description="Disordered" evidence="4">
    <location>
        <begin position="38"/>
        <end position="57"/>
    </location>
</feature>
<feature type="region of interest" description="Disordered" evidence="4">
    <location>
        <begin position="407"/>
        <end position="433"/>
    </location>
</feature>
<feature type="region of interest" description="Disordered" evidence="4">
    <location>
        <begin position="532"/>
        <end position="616"/>
    </location>
</feature>
<feature type="region of interest" description="Disordered" evidence="4">
    <location>
        <begin position="745"/>
        <end position="803"/>
    </location>
</feature>
<feature type="compositionally biased region" description="Polar residues" evidence="4">
    <location>
        <begin position="412"/>
        <end position="429"/>
    </location>
</feature>
<feature type="compositionally biased region" description="Polar residues" evidence="4">
    <location>
        <begin position="542"/>
        <end position="554"/>
    </location>
</feature>
<feature type="compositionally biased region" description="Basic and acidic residues" evidence="4">
    <location>
        <begin position="555"/>
        <end position="565"/>
    </location>
</feature>
<feature type="modified residue" description="Phosphoserine" evidence="12">
    <location>
        <position position="71"/>
    </location>
</feature>
<feature type="modified residue" description="Phosphoserine" evidence="2">
    <location>
        <position position="102"/>
    </location>
</feature>
<feature type="modified residue" description="Phosphoserine" evidence="2">
    <location>
        <position position="412"/>
    </location>
</feature>
<feature type="modified residue" description="Phosphoserine" evidence="2">
    <location>
        <position position="416"/>
    </location>
</feature>
<feature type="mutagenesis site" description="Loss of DNA-binding." evidence="5">
    <original>LG</original>
    <variation>EF</variation>
    <location>
        <begin position="118"/>
        <end position="119"/>
    </location>
</feature>
<feature type="mutagenesis site" description="Loss of DNA-binding." evidence="5">
    <original>LR</original>
    <variation>EF</variation>
    <location>
        <begin position="266"/>
        <end position="267"/>
    </location>
</feature>
<feature type="sequence conflict" description="In Ref. 2; BAC33794." evidence="11" ref="2">
    <original>M</original>
    <variation>T</variation>
    <location>
        <position position="65"/>
    </location>
</feature>
<feature type="sequence conflict" description="In Ref. 3; AAH86675." evidence="11" ref="3">
    <original>N</original>
    <variation>Y</variation>
    <location>
        <position position="138"/>
    </location>
</feature>
<feature type="sequence conflict" description="In Ref. 2; BAC39205." evidence="11" ref="2">
    <original>R</original>
    <variation>Q</variation>
    <location>
        <position position="155"/>
    </location>
</feature>
<feature type="sequence conflict" description="In Ref. 2; BAC39205." evidence="11" ref="2">
    <original>I</original>
    <variation>T</variation>
    <location>
        <position position="209"/>
    </location>
</feature>
<comment type="function">
    <text evidence="6 7 8 9 10">Atypical E2F transcription factor that participates in various processes such as angiogenesis and polyploidization of specialized cells. Mainly acts as a transcription repressor that binds DNA independently of DP proteins and specifically recognizes the E2 recognition site 5'-TTTC[CG]CGC-3'. Directly represses transcription of classical E2F transcription factors such as E2F1: component of a feedback loop in S phase by repressing the expression of E2F1, thereby preventing p53/TP53-dependent apoptosis. Plays a key role in polyploidization of cells in placenta and liver by regulating the endocycle, probably by repressing genes promoting cytokinesis and antagonizing action of classical E2F proteins (E2F1, E2F2 and/or E2F3). Required for placental development by promoting polyploidization of trophoblast giant cells. Acts as a promoter of sprouting angiogenesis, possibly by acting as a transcription activator: associates with HIF1A, recognizes and binds the VEGFA promoter, which is different from canonical E2 recognition site, and activates expression of the VEGFA gene.</text>
</comment>
<comment type="subunit">
    <text evidence="1">Interacts with HIF1A (By similarity). Homodimer and heterodimer: mainly forms homodimers and, to a lesser extent, heterodimers with E2F8. Dimerization is important for DNA-binding.</text>
</comment>
<comment type="interaction">
    <interactant intactId="EBI-1390691">
        <id>Q58FA4</id>
    </interactant>
    <interactant intactId="EBI-1390691">
        <id>Q58FA4</id>
        <label>E2f8</label>
    </interactant>
    <organismsDiffer>false</organismsDiffer>
    <experiments>3</experiments>
</comment>
<comment type="subcellular location">
    <subcellularLocation>
        <location evidence="5">Nucleus</location>
    </subcellularLocation>
</comment>
<comment type="tissue specificity">
    <text evidence="5 7 10">Highly expressed in liver, skin, thymus and testis. Expressed in trophoblast giant cells throughout placenta development (at protein level).</text>
</comment>
<comment type="induction">
    <text evidence="9">Induced at the onset of hepatocyte polyploidization.</text>
</comment>
<comment type="domain">
    <text evidence="1">In contrast to classical members of the E2F transcription factor, atypical members contain 2 DNA-binding domains and regulate transcription in a DP-independent manner. Both DNA-binding domains are required for DNA-binding and are proposed to form an intramolecular structure that is similar to the winged helix structure of the E2F-DP heterodimer (By similarity).</text>
</comment>
<comment type="disruption phenotype">
    <text evidence="6">No visible phenotype; mice develop normally and live to old age. E2f7 and E2f8 double knockout embryos die by 11.5 dpc of massive apoptosis and dilation of blood vessels and show increased expression of E2f1 and p53/Tp53, as well as many stress-related genes.</text>
</comment>
<comment type="similarity">
    <text evidence="11">Belongs to the E2F/DP family.</text>
</comment>
<protein>
    <recommendedName>
        <fullName>Transcription factor E2F8</fullName>
        <shortName>E2F-8</shortName>
    </recommendedName>
</protein>
<gene>
    <name type="primary">E2f8</name>
</gene>
<sequence>MENQKENLFSEPHKRGLMKSPLHPSSKANMVLAEIQPDLGPLTTPTKPKEVSQGEPWTPTANLKMLISAVSPEIRSRDQKRGLSDNRSALPEARDCLHEHLSGDEFEKSQPSRKEKSLGLLCHKFLARYPKYPNPAVNNDICLDEVAEELNVERRRIYDIVNVLESLHMVSRLAKNRYTWHGRHNLTKTLGTLKSVGEENKYAEQIMMIKRKEYEQEFDFIKSCGIEDHVIKSHTGQNGHSDMCFVELPGVEFRAASVNSRKDKSLRVMSQKFVMLFLVSTPQIVSLEIAAKILIGEDHVEDLDKSKYKTKIRRLYDIANVLSSLDLIKKVHVTEERGRKPAFKWTGPEISPNNSGSSPIMPLPASLEAEQSAKENCAKNLFSTRGKPSFTRHPSLIKLVKSIENDRRKISSAPSSPVKSNKAESSQNSPPVPNKMAQLAAICKMQLEEQSSEPRKKVKVNLARSGHYKPLAPLDPTVNTELELLTPSLIQPLGVVPLIPSPLSSAVPVILPQAPSGPSYAIYLQPAQAQMLTPPPGLSPTVCPTQPSNATGSKDPTDAPAEKTATDAATTGSLQPAPERHGAKHRSKETTGDRGTKRMITAEDSGPSSVKKPKEDLKALENVPTPTPLFPSGYLIPLTQCSSLGPDSVLSNTENSGTPSPNHRIYGSPIAGVIPVASSELTAVNFPPFHVTPLKLMVSPTSMAAVPVGNSPALNSGHPAPAQNPSSAIVNFTLQHLGLISPGVQMSASPGPGAGTVPVSPRVEADNLSSRQRRATNHDSPVLGQSQLNGQPVAGTGAQQPVPVTPKGSQLVAENFFRTPGGPTKPTSSPYTDFDGANKTSFGTLFVPQRKLEVSTEDIH</sequence>
<dbReference type="EMBL" id="AY957576">
    <property type="protein sequence ID" value="AAX49603.1"/>
    <property type="molecule type" value="mRNA"/>
</dbReference>
<dbReference type="EMBL" id="AK049525">
    <property type="protein sequence ID" value="BAC33794.1"/>
    <property type="molecule type" value="mRNA"/>
</dbReference>
<dbReference type="EMBL" id="AK084513">
    <property type="protein sequence ID" value="BAC39205.1"/>
    <property type="molecule type" value="mRNA"/>
</dbReference>
<dbReference type="EMBL" id="AK154018">
    <property type="protein sequence ID" value="BAE32318.1"/>
    <property type="molecule type" value="mRNA"/>
</dbReference>
<dbReference type="EMBL" id="AK157235">
    <property type="protein sequence ID" value="BAE34010.1"/>
    <property type="molecule type" value="mRNA"/>
</dbReference>
<dbReference type="EMBL" id="AK160240">
    <property type="protein sequence ID" value="BAE35708.1"/>
    <property type="molecule type" value="mRNA"/>
</dbReference>
<dbReference type="EMBL" id="BC086675">
    <property type="protein sequence ID" value="AAH86675.1"/>
    <property type="molecule type" value="mRNA"/>
</dbReference>
<dbReference type="EMBL" id="BC100357">
    <property type="protein sequence ID" value="AAI00358.1"/>
    <property type="molecule type" value="mRNA"/>
</dbReference>
<dbReference type="CCDS" id="CCDS39967.1"/>
<dbReference type="RefSeq" id="NP_001013386.2">
    <property type="nucleotide sequence ID" value="NM_001013368.5"/>
</dbReference>
<dbReference type="RefSeq" id="NP_001347741.1">
    <property type="nucleotide sequence ID" value="NM_001360812.1"/>
</dbReference>
<dbReference type="RefSeq" id="XP_006540616.1">
    <property type="nucleotide sequence ID" value="XM_006540553.3"/>
</dbReference>
<dbReference type="RefSeq" id="XP_006540617.1">
    <property type="nucleotide sequence ID" value="XM_006540554.3"/>
</dbReference>
<dbReference type="SMR" id="Q58FA4"/>
<dbReference type="BioGRID" id="224496">
    <property type="interactions" value="1"/>
</dbReference>
<dbReference type="FunCoup" id="Q58FA4">
    <property type="interactions" value="2167"/>
</dbReference>
<dbReference type="IntAct" id="Q58FA4">
    <property type="interactions" value="2"/>
</dbReference>
<dbReference type="MINT" id="Q58FA4"/>
<dbReference type="STRING" id="10090.ENSMUSP00000056778"/>
<dbReference type="GlyGen" id="Q58FA4">
    <property type="glycosylation" value="2 sites"/>
</dbReference>
<dbReference type="iPTMnet" id="Q58FA4"/>
<dbReference type="PhosphoSitePlus" id="Q58FA4"/>
<dbReference type="jPOST" id="Q58FA4"/>
<dbReference type="PaxDb" id="10090-ENSMUSP00000056778"/>
<dbReference type="PeptideAtlas" id="Q58FA4"/>
<dbReference type="ProteomicsDB" id="277704"/>
<dbReference type="Antibodypedia" id="25218">
    <property type="antibodies" value="198 antibodies from 32 providers"/>
</dbReference>
<dbReference type="Ensembl" id="ENSMUST00000058745.15">
    <property type="protein sequence ID" value="ENSMUSP00000056778.9"/>
    <property type="gene ID" value="ENSMUSG00000046179.18"/>
</dbReference>
<dbReference type="Ensembl" id="ENSMUST00000119223.2">
    <property type="protein sequence ID" value="ENSMUSP00000112883.2"/>
    <property type="gene ID" value="ENSMUSG00000046179.18"/>
</dbReference>
<dbReference type="GeneID" id="108961"/>
<dbReference type="KEGG" id="mmu:108961"/>
<dbReference type="UCSC" id="uc009haz.2">
    <property type="organism name" value="mouse"/>
</dbReference>
<dbReference type="AGR" id="MGI:1922038"/>
<dbReference type="CTD" id="79733"/>
<dbReference type="MGI" id="MGI:1922038">
    <property type="gene designation" value="E2f8"/>
</dbReference>
<dbReference type="VEuPathDB" id="HostDB:ENSMUSG00000046179"/>
<dbReference type="eggNOG" id="KOG2578">
    <property type="taxonomic scope" value="Eukaryota"/>
</dbReference>
<dbReference type="GeneTree" id="ENSGT00940000158651"/>
<dbReference type="HOGENOM" id="CLU_014845_2_0_1"/>
<dbReference type="InParanoid" id="Q58FA4"/>
<dbReference type="OMA" id="LEHSVEC"/>
<dbReference type="OrthoDB" id="5318at2759"/>
<dbReference type="PhylomeDB" id="Q58FA4"/>
<dbReference type="TreeFam" id="TF105567"/>
<dbReference type="Reactome" id="R-MMU-6804116">
    <property type="pathway name" value="TP53 Regulates Transcription of Genes Involved in G1 Cell Cycle Arrest"/>
</dbReference>
<dbReference type="BioGRID-ORCS" id="108961">
    <property type="hits" value="3 hits in 80 CRISPR screens"/>
</dbReference>
<dbReference type="ChiTaRS" id="E2f8">
    <property type="organism name" value="mouse"/>
</dbReference>
<dbReference type="PRO" id="PR:Q58FA4"/>
<dbReference type="Proteomes" id="UP000000589">
    <property type="component" value="Chromosome 7"/>
</dbReference>
<dbReference type="RNAct" id="Q58FA4">
    <property type="molecule type" value="protein"/>
</dbReference>
<dbReference type="Bgee" id="ENSMUSG00000046179">
    <property type="expression patterns" value="Expressed in ileal epithelium and 177 other cell types or tissues"/>
</dbReference>
<dbReference type="GO" id="GO:0005829">
    <property type="term" value="C:cytosol"/>
    <property type="evidence" value="ECO:0007669"/>
    <property type="project" value="Ensembl"/>
</dbReference>
<dbReference type="GO" id="GO:0005730">
    <property type="term" value="C:nucleolus"/>
    <property type="evidence" value="ECO:0007669"/>
    <property type="project" value="Ensembl"/>
</dbReference>
<dbReference type="GO" id="GO:0005654">
    <property type="term" value="C:nucleoplasm"/>
    <property type="evidence" value="ECO:0007669"/>
    <property type="project" value="Ensembl"/>
</dbReference>
<dbReference type="GO" id="GO:0005634">
    <property type="term" value="C:nucleus"/>
    <property type="evidence" value="ECO:0000314"/>
    <property type="project" value="MGI"/>
</dbReference>
<dbReference type="GO" id="GO:0005667">
    <property type="term" value="C:transcription regulator complex"/>
    <property type="evidence" value="ECO:0007669"/>
    <property type="project" value="InterPro"/>
</dbReference>
<dbReference type="GO" id="GO:0003677">
    <property type="term" value="F:DNA binding"/>
    <property type="evidence" value="ECO:0000314"/>
    <property type="project" value="MGI"/>
</dbReference>
<dbReference type="GO" id="GO:0003700">
    <property type="term" value="F:DNA-binding transcription factor activity"/>
    <property type="evidence" value="ECO:0000315"/>
    <property type="project" value="UniProtKB"/>
</dbReference>
<dbReference type="GO" id="GO:0001217">
    <property type="term" value="F:DNA-binding transcription repressor activity"/>
    <property type="evidence" value="ECO:0000315"/>
    <property type="project" value="UniProtKB"/>
</dbReference>
<dbReference type="GO" id="GO:0001227">
    <property type="term" value="F:DNA-binding transcription repressor activity, RNA polymerase II-specific"/>
    <property type="evidence" value="ECO:0007669"/>
    <property type="project" value="Ensembl"/>
</dbReference>
<dbReference type="GO" id="GO:0042802">
    <property type="term" value="F:identical protein binding"/>
    <property type="evidence" value="ECO:0000353"/>
    <property type="project" value="IntAct"/>
</dbReference>
<dbReference type="GO" id="GO:0000978">
    <property type="term" value="F:RNA polymerase II cis-regulatory region sequence-specific DNA binding"/>
    <property type="evidence" value="ECO:0007669"/>
    <property type="project" value="Ensembl"/>
</dbReference>
<dbReference type="GO" id="GO:0033301">
    <property type="term" value="P:cell cycle comprising mitosis without cytokinesis"/>
    <property type="evidence" value="ECO:0000315"/>
    <property type="project" value="UniProtKB"/>
</dbReference>
<dbReference type="GO" id="GO:0060718">
    <property type="term" value="P:chorionic trophoblast cell differentiation"/>
    <property type="evidence" value="ECO:0000315"/>
    <property type="project" value="UniProtKB"/>
</dbReference>
<dbReference type="GO" id="GO:0048144">
    <property type="term" value="P:fibroblast proliferation"/>
    <property type="evidence" value="ECO:0000314"/>
    <property type="project" value="MGI"/>
</dbReference>
<dbReference type="GO" id="GO:0070365">
    <property type="term" value="P:hepatocyte differentiation"/>
    <property type="evidence" value="ECO:0000315"/>
    <property type="project" value="UniProtKB"/>
</dbReference>
<dbReference type="GO" id="GO:0032466">
    <property type="term" value="P:negative regulation of cytokinesis"/>
    <property type="evidence" value="ECO:0000315"/>
    <property type="project" value="UniProtKB"/>
</dbReference>
<dbReference type="GO" id="GO:0000122">
    <property type="term" value="P:negative regulation of transcription by RNA polymerase II"/>
    <property type="evidence" value="ECO:0000315"/>
    <property type="project" value="UniProtKB"/>
</dbReference>
<dbReference type="GO" id="GO:0001890">
    <property type="term" value="P:placenta development"/>
    <property type="evidence" value="ECO:0000315"/>
    <property type="project" value="UniProtKB"/>
</dbReference>
<dbReference type="GO" id="GO:0032877">
    <property type="term" value="P:positive regulation of DNA endoreduplication"/>
    <property type="evidence" value="ECO:0000315"/>
    <property type="project" value="UniProtKB"/>
</dbReference>
<dbReference type="GO" id="GO:0045944">
    <property type="term" value="P:positive regulation of transcription by RNA polymerase II"/>
    <property type="evidence" value="ECO:0007669"/>
    <property type="project" value="Ensembl"/>
</dbReference>
<dbReference type="GO" id="GO:0002040">
    <property type="term" value="P:sprouting angiogenesis"/>
    <property type="evidence" value="ECO:0000315"/>
    <property type="project" value="UniProtKB"/>
</dbReference>
<dbReference type="GO" id="GO:0060707">
    <property type="term" value="P:trophoblast giant cell differentiation"/>
    <property type="evidence" value="ECO:0000315"/>
    <property type="project" value="UniProtKB"/>
</dbReference>
<dbReference type="FunFam" id="1.10.10.10:FF:000073">
    <property type="entry name" value="E2F transcription factor 8"/>
    <property type="match status" value="1"/>
</dbReference>
<dbReference type="FunFam" id="1.10.10.10:FF:000100">
    <property type="entry name" value="E2F transcription factor 8"/>
    <property type="match status" value="1"/>
</dbReference>
<dbReference type="Gene3D" id="1.10.10.10">
    <property type="entry name" value="Winged helix-like DNA-binding domain superfamily/Winged helix DNA-binding domain"/>
    <property type="match status" value="2"/>
</dbReference>
<dbReference type="InterPro" id="IPR015633">
    <property type="entry name" value="E2F"/>
</dbReference>
<dbReference type="InterPro" id="IPR003316">
    <property type="entry name" value="E2F_WHTH_DNA-bd_dom"/>
</dbReference>
<dbReference type="InterPro" id="IPR036388">
    <property type="entry name" value="WH-like_DNA-bd_sf"/>
</dbReference>
<dbReference type="InterPro" id="IPR036390">
    <property type="entry name" value="WH_DNA-bd_sf"/>
</dbReference>
<dbReference type="PANTHER" id="PTHR12081">
    <property type="entry name" value="TRANSCRIPTION FACTOR E2F"/>
    <property type="match status" value="1"/>
</dbReference>
<dbReference type="PANTHER" id="PTHR12081:SF40">
    <property type="entry name" value="TRANSCRIPTION FACTOR E2F8"/>
    <property type="match status" value="1"/>
</dbReference>
<dbReference type="Pfam" id="PF02319">
    <property type="entry name" value="E2F_TDP"/>
    <property type="match status" value="2"/>
</dbReference>
<dbReference type="SMART" id="SM01372">
    <property type="entry name" value="E2F_TDP"/>
    <property type="match status" value="2"/>
</dbReference>
<dbReference type="SUPFAM" id="SSF46785">
    <property type="entry name" value="Winged helix' DNA-binding domain"/>
    <property type="match status" value="2"/>
</dbReference>
<keyword id="KW-0010">Activator</keyword>
<keyword id="KW-0131">Cell cycle</keyword>
<keyword id="KW-0238">DNA-binding</keyword>
<keyword id="KW-0539">Nucleus</keyword>
<keyword id="KW-0597">Phosphoprotein</keyword>
<keyword id="KW-1185">Reference proteome</keyword>
<keyword id="KW-0678">Repressor</keyword>
<keyword id="KW-0804">Transcription</keyword>
<keyword id="KW-0805">Transcription regulation</keyword>
<organism>
    <name type="scientific">Mus musculus</name>
    <name type="common">Mouse</name>
    <dbReference type="NCBI Taxonomy" id="10090"/>
    <lineage>
        <taxon>Eukaryota</taxon>
        <taxon>Metazoa</taxon>
        <taxon>Chordata</taxon>
        <taxon>Craniata</taxon>
        <taxon>Vertebrata</taxon>
        <taxon>Euteleostomi</taxon>
        <taxon>Mammalia</taxon>
        <taxon>Eutheria</taxon>
        <taxon>Euarchontoglires</taxon>
        <taxon>Glires</taxon>
        <taxon>Rodentia</taxon>
        <taxon>Myomorpha</taxon>
        <taxon>Muroidea</taxon>
        <taxon>Muridae</taxon>
        <taxon>Murinae</taxon>
        <taxon>Mus</taxon>
        <taxon>Mus</taxon>
    </lineage>
</organism>
<evidence type="ECO:0000250" key="1"/>
<evidence type="ECO:0000250" key="2">
    <source>
        <dbReference type="UniProtKB" id="A0AVK6"/>
    </source>
</evidence>
<evidence type="ECO:0000255" key="3"/>
<evidence type="ECO:0000256" key="4">
    <source>
        <dbReference type="SAM" id="MobiDB-lite"/>
    </source>
</evidence>
<evidence type="ECO:0000269" key="5">
    <source>
    </source>
</evidence>
<evidence type="ECO:0000269" key="6">
    <source>
    </source>
</evidence>
<evidence type="ECO:0000269" key="7">
    <source>
    </source>
</evidence>
<evidence type="ECO:0000269" key="8">
    <source>
    </source>
</evidence>
<evidence type="ECO:0000269" key="9">
    <source>
    </source>
</evidence>
<evidence type="ECO:0000269" key="10">
    <source>
    </source>
</evidence>
<evidence type="ECO:0000305" key="11"/>
<evidence type="ECO:0007744" key="12">
    <source>
    </source>
</evidence>
<name>E2F8_MOUSE</name>
<accession>Q58FA4</accession>
<accession>Q3U4W2</accession>
<accession>Q497V7</accession>
<accession>Q5PRE4</accession>
<accession>Q8BQJ5</accession>
<accession>Q8C3Y5</accession>
<proteinExistence type="evidence at protein level"/>
<reference key="1">
    <citation type="journal article" date="2005" name="J. Biol. Chem.">
        <title>Cloning and characterization of mouse E2F8, a novel mammalian E2F family member capable of blocking cellular proliferation.</title>
        <authorList>
            <person name="Maiti B."/>
            <person name="Li J."/>
            <person name="de Bruin A."/>
            <person name="Gordon F."/>
            <person name="Timmers C."/>
            <person name="Opavsky R."/>
            <person name="Patil K."/>
            <person name="Tuttle J."/>
            <person name="Cleghorn W."/>
            <person name="Leone G."/>
        </authorList>
    </citation>
    <scope>NUCLEOTIDE SEQUENCE [MRNA]</scope>
    <scope>SUBCELLULAR LOCATION</scope>
    <scope>TISSUE SPECIFICITY</scope>
    <scope>SELF-ASSOCIATION</scope>
    <scope>MUTAGENESIS OF 118-LEU-GLY-119 AND 266-LEU-ARG-267</scope>
    <source>
        <strain>Swiss Webster</strain>
    </source>
</reference>
<reference key="2">
    <citation type="journal article" date="2005" name="Science">
        <title>The transcriptional landscape of the mammalian genome.</title>
        <authorList>
            <person name="Carninci P."/>
            <person name="Kasukawa T."/>
            <person name="Katayama S."/>
            <person name="Gough J."/>
            <person name="Frith M.C."/>
            <person name="Maeda N."/>
            <person name="Oyama R."/>
            <person name="Ravasi T."/>
            <person name="Lenhard B."/>
            <person name="Wells C."/>
            <person name="Kodzius R."/>
            <person name="Shimokawa K."/>
            <person name="Bajic V.B."/>
            <person name="Brenner S.E."/>
            <person name="Batalov S."/>
            <person name="Forrest A.R."/>
            <person name="Zavolan M."/>
            <person name="Davis M.J."/>
            <person name="Wilming L.G."/>
            <person name="Aidinis V."/>
            <person name="Allen J.E."/>
            <person name="Ambesi-Impiombato A."/>
            <person name="Apweiler R."/>
            <person name="Aturaliya R.N."/>
            <person name="Bailey T.L."/>
            <person name="Bansal M."/>
            <person name="Baxter L."/>
            <person name="Beisel K.W."/>
            <person name="Bersano T."/>
            <person name="Bono H."/>
            <person name="Chalk A.M."/>
            <person name="Chiu K.P."/>
            <person name="Choudhary V."/>
            <person name="Christoffels A."/>
            <person name="Clutterbuck D.R."/>
            <person name="Crowe M.L."/>
            <person name="Dalla E."/>
            <person name="Dalrymple B.P."/>
            <person name="de Bono B."/>
            <person name="Della Gatta G."/>
            <person name="di Bernardo D."/>
            <person name="Down T."/>
            <person name="Engstrom P."/>
            <person name="Fagiolini M."/>
            <person name="Faulkner G."/>
            <person name="Fletcher C.F."/>
            <person name="Fukushima T."/>
            <person name="Furuno M."/>
            <person name="Futaki S."/>
            <person name="Gariboldi M."/>
            <person name="Georgii-Hemming P."/>
            <person name="Gingeras T.R."/>
            <person name="Gojobori T."/>
            <person name="Green R.E."/>
            <person name="Gustincich S."/>
            <person name="Harbers M."/>
            <person name="Hayashi Y."/>
            <person name="Hensch T.K."/>
            <person name="Hirokawa N."/>
            <person name="Hill D."/>
            <person name="Huminiecki L."/>
            <person name="Iacono M."/>
            <person name="Ikeo K."/>
            <person name="Iwama A."/>
            <person name="Ishikawa T."/>
            <person name="Jakt M."/>
            <person name="Kanapin A."/>
            <person name="Katoh M."/>
            <person name="Kawasawa Y."/>
            <person name="Kelso J."/>
            <person name="Kitamura H."/>
            <person name="Kitano H."/>
            <person name="Kollias G."/>
            <person name="Krishnan S.P."/>
            <person name="Kruger A."/>
            <person name="Kummerfeld S.K."/>
            <person name="Kurochkin I.V."/>
            <person name="Lareau L.F."/>
            <person name="Lazarevic D."/>
            <person name="Lipovich L."/>
            <person name="Liu J."/>
            <person name="Liuni S."/>
            <person name="McWilliam S."/>
            <person name="Madan Babu M."/>
            <person name="Madera M."/>
            <person name="Marchionni L."/>
            <person name="Matsuda H."/>
            <person name="Matsuzawa S."/>
            <person name="Miki H."/>
            <person name="Mignone F."/>
            <person name="Miyake S."/>
            <person name="Morris K."/>
            <person name="Mottagui-Tabar S."/>
            <person name="Mulder N."/>
            <person name="Nakano N."/>
            <person name="Nakauchi H."/>
            <person name="Ng P."/>
            <person name="Nilsson R."/>
            <person name="Nishiguchi S."/>
            <person name="Nishikawa S."/>
            <person name="Nori F."/>
            <person name="Ohara O."/>
            <person name="Okazaki Y."/>
            <person name="Orlando V."/>
            <person name="Pang K.C."/>
            <person name="Pavan W.J."/>
            <person name="Pavesi G."/>
            <person name="Pesole G."/>
            <person name="Petrovsky N."/>
            <person name="Piazza S."/>
            <person name="Reed J."/>
            <person name="Reid J.F."/>
            <person name="Ring B.Z."/>
            <person name="Ringwald M."/>
            <person name="Rost B."/>
            <person name="Ruan Y."/>
            <person name="Salzberg S.L."/>
            <person name="Sandelin A."/>
            <person name="Schneider C."/>
            <person name="Schoenbach C."/>
            <person name="Sekiguchi K."/>
            <person name="Semple C.A."/>
            <person name="Seno S."/>
            <person name="Sessa L."/>
            <person name="Sheng Y."/>
            <person name="Shibata Y."/>
            <person name="Shimada H."/>
            <person name="Shimada K."/>
            <person name="Silva D."/>
            <person name="Sinclair B."/>
            <person name="Sperling S."/>
            <person name="Stupka E."/>
            <person name="Sugiura K."/>
            <person name="Sultana R."/>
            <person name="Takenaka Y."/>
            <person name="Taki K."/>
            <person name="Tammoja K."/>
            <person name="Tan S.L."/>
            <person name="Tang S."/>
            <person name="Taylor M.S."/>
            <person name="Tegner J."/>
            <person name="Teichmann S.A."/>
            <person name="Ueda H.R."/>
            <person name="van Nimwegen E."/>
            <person name="Verardo R."/>
            <person name="Wei C.L."/>
            <person name="Yagi K."/>
            <person name="Yamanishi H."/>
            <person name="Zabarovsky E."/>
            <person name="Zhu S."/>
            <person name="Zimmer A."/>
            <person name="Hide W."/>
            <person name="Bult C."/>
            <person name="Grimmond S.M."/>
            <person name="Teasdale R.D."/>
            <person name="Liu E.T."/>
            <person name="Brusic V."/>
            <person name="Quackenbush J."/>
            <person name="Wahlestedt C."/>
            <person name="Mattick J.S."/>
            <person name="Hume D.A."/>
            <person name="Kai C."/>
            <person name="Sasaki D."/>
            <person name="Tomaru Y."/>
            <person name="Fukuda S."/>
            <person name="Kanamori-Katayama M."/>
            <person name="Suzuki M."/>
            <person name="Aoki J."/>
            <person name="Arakawa T."/>
            <person name="Iida J."/>
            <person name="Imamura K."/>
            <person name="Itoh M."/>
            <person name="Kato T."/>
            <person name="Kawaji H."/>
            <person name="Kawagashira N."/>
            <person name="Kawashima T."/>
            <person name="Kojima M."/>
            <person name="Kondo S."/>
            <person name="Konno H."/>
            <person name="Nakano K."/>
            <person name="Ninomiya N."/>
            <person name="Nishio T."/>
            <person name="Okada M."/>
            <person name="Plessy C."/>
            <person name="Shibata K."/>
            <person name="Shiraki T."/>
            <person name="Suzuki S."/>
            <person name="Tagami M."/>
            <person name="Waki K."/>
            <person name="Watahiki A."/>
            <person name="Okamura-Oho Y."/>
            <person name="Suzuki H."/>
            <person name="Kawai J."/>
            <person name="Hayashizaki Y."/>
        </authorList>
    </citation>
    <scope>NUCLEOTIDE SEQUENCE [LARGE SCALE MRNA]</scope>
    <source>
        <strain>C57BL/6J</strain>
        <strain>NOD</strain>
        <tissue>Heart</tissue>
        <tissue>Liver</tissue>
        <tissue>Spleen</tissue>
        <tissue>Thymus</tissue>
    </source>
</reference>
<reference key="3">
    <citation type="journal article" date="2004" name="Genome Res.">
        <title>The status, quality, and expansion of the NIH full-length cDNA project: the Mammalian Gene Collection (MGC).</title>
        <authorList>
            <consortium name="The MGC Project Team"/>
        </authorList>
    </citation>
    <scope>NUCLEOTIDE SEQUENCE [LARGE SCALE MRNA]</scope>
    <source>
        <strain>C57BL/6J</strain>
        <tissue>Head</tissue>
        <tissue>Placenta</tissue>
    </source>
</reference>
<reference key="4">
    <citation type="journal article" date="2008" name="Dev. Cell">
        <title>Synergistic function of E2F7 and E2F8 is essential for cell survival and embryonic development.</title>
        <authorList>
            <person name="Li J."/>
            <person name="Ran C."/>
            <person name="Li E."/>
            <person name="Gordon F."/>
            <person name="Comstock G."/>
            <person name="Siddiqui H."/>
            <person name="Cleghorn W."/>
            <person name="Chen H.-Z."/>
            <person name="Kornacker K."/>
            <person name="Liu C.-G."/>
            <person name="Pandit S.K."/>
            <person name="Khanizadeh M."/>
            <person name="Weinstein M."/>
            <person name="Leone G."/>
            <person name="de Bruin A."/>
        </authorList>
    </citation>
    <scope>FUNCTION</scope>
    <scope>DISRUPTION PHENOTYPE</scope>
</reference>
<reference key="5">
    <citation type="journal article" date="2010" name="Cell">
        <title>A tissue-specific atlas of mouse protein phosphorylation and expression.</title>
        <authorList>
            <person name="Huttlin E.L."/>
            <person name="Jedrychowski M.P."/>
            <person name="Elias J.E."/>
            <person name="Goswami T."/>
            <person name="Rad R."/>
            <person name="Beausoleil S.A."/>
            <person name="Villen J."/>
            <person name="Haas W."/>
            <person name="Sowa M.E."/>
            <person name="Gygi S.P."/>
        </authorList>
    </citation>
    <scope>PHOSPHORYLATION [LARGE SCALE ANALYSIS] AT SER-71</scope>
    <scope>IDENTIFICATION BY MASS SPECTROMETRY [LARGE SCALE ANALYSIS]</scope>
    <source>
        <tissue>Testis</tissue>
    </source>
</reference>
<reference key="6">
    <citation type="journal article" date="2012" name="EMBO J.">
        <title>E2F7 and E2F8 promote angiogenesis through transcriptional activation of VEGFA in cooperation with HIF1.</title>
        <authorList>
            <person name="Weijts B.G."/>
            <person name="Bakker W.J."/>
            <person name="Cornelissen P.W."/>
            <person name="Liang K.H."/>
            <person name="Schaftenaar F.H."/>
            <person name="Westendorp B."/>
            <person name="de Wolf C.A."/>
            <person name="Paciejewska M."/>
            <person name="Scheele C.L."/>
            <person name="Kent L."/>
            <person name="Leone G."/>
            <person name="Schulte-Merker S."/>
            <person name="de Bruin A."/>
        </authorList>
    </citation>
    <scope>FUNCTION</scope>
</reference>
<reference key="7">
    <citation type="journal article" date="2012" name="Dev. Cell">
        <title>Atypical E2F repressors and activators coordinate placental development.</title>
        <authorList>
            <person name="Ouseph M.M."/>
            <person name="Li J."/>
            <person name="Chen H.Z."/>
            <person name="Pecot T."/>
            <person name="Wenzel P."/>
            <person name="Thompson J.C."/>
            <person name="Comstock G."/>
            <person name="Chokshi V."/>
            <person name="Byrne M."/>
            <person name="Forde B."/>
            <person name="Chong J.L."/>
            <person name="Huang K."/>
            <person name="Machiraju R."/>
            <person name="de Bruin A."/>
            <person name="Leone G."/>
        </authorList>
    </citation>
    <scope>FUNCTION</scope>
    <scope>TISSUE SPECIFICITY</scope>
</reference>
<reference key="8">
    <citation type="journal article" date="2012" name="Nat. Cell Biol.">
        <title>E2F8 is essential for polyploidization in mammalian cells.</title>
        <authorList>
            <person name="Pandit S.K."/>
            <person name="Westendorp B."/>
            <person name="Nantasanti S."/>
            <person name="van Liere E."/>
            <person name="Tooten P.C."/>
            <person name="Cornelissen P.W."/>
            <person name="Toussaint M.J."/>
            <person name="Lamers W.H."/>
            <person name="de Bruin A."/>
        </authorList>
    </citation>
    <scope>FUNCTION</scope>
    <scope>INDUCTION</scope>
</reference>
<reference key="9">
    <citation type="journal article" date="2012" name="Nat. Cell Biol.">
        <title>Canonical and atypical E2Fs regulate the mammalian endocycle.</title>
        <authorList>
            <person name="Chen H.Z."/>
            <person name="Ouseph M.M."/>
            <person name="Li J."/>
            <person name="Pecot T."/>
            <person name="Chokshi V."/>
            <person name="Kent L."/>
            <person name="Bae S."/>
            <person name="Byrne M."/>
            <person name="Duran C."/>
            <person name="Comstock G."/>
            <person name="Trikha P."/>
            <person name="Mair M."/>
            <person name="Senapati S."/>
            <person name="Martin C.K."/>
            <person name="Gandhi S."/>
            <person name="Wilson N."/>
            <person name="Liu B."/>
            <person name="Huang Y.W."/>
            <person name="Thompson J.C."/>
            <person name="Raman S."/>
            <person name="Singh S."/>
            <person name="Leone M."/>
            <person name="Machiraju R."/>
            <person name="Huang K."/>
            <person name="Mo X."/>
            <person name="Fernandez S."/>
            <person name="Kalaszczynska I."/>
            <person name="Wolgemuth D.J."/>
            <person name="Sicinski P."/>
            <person name="Huang T."/>
            <person name="Jin V."/>
            <person name="Leone G."/>
        </authorList>
    </citation>
    <scope>FUNCTION</scope>
    <scope>TISSUE SPECIFICITY</scope>
</reference>